<accession>P0DJ24</accession>
<accession>Q22C92</accession>
<reference key="1">
    <citation type="journal article" date="2006" name="PLoS Biol.">
        <title>Macronuclear genome sequence of the ciliate Tetrahymena thermophila, a model eukaryote.</title>
        <authorList>
            <person name="Eisen J.A."/>
            <person name="Coyne R.S."/>
            <person name="Wu M."/>
            <person name="Wu D."/>
            <person name="Thiagarajan M."/>
            <person name="Wortman J.R."/>
            <person name="Badger J.H."/>
            <person name="Ren Q."/>
            <person name="Amedeo P."/>
            <person name="Jones K.M."/>
            <person name="Tallon L.J."/>
            <person name="Delcher A.L."/>
            <person name="Salzberg S.L."/>
            <person name="Silva J.C."/>
            <person name="Haas B.J."/>
            <person name="Majoros W.H."/>
            <person name="Farzad M."/>
            <person name="Carlton J.M."/>
            <person name="Smith R.K. Jr."/>
            <person name="Garg J."/>
            <person name="Pearlman R.E."/>
            <person name="Karrer K.M."/>
            <person name="Sun L."/>
            <person name="Manning G."/>
            <person name="Elde N.C."/>
            <person name="Turkewitz A.P."/>
            <person name="Asai D.J."/>
            <person name="Wilkes D.E."/>
            <person name="Wang Y."/>
            <person name="Cai H."/>
            <person name="Collins K."/>
            <person name="Stewart B.A."/>
            <person name="Lee S.R."/>
            <person name="Wilamowska K."/>
            <person name="Weinberg Z."/>
            <person name="Ruzzo W.L."/>
            <person name="Wloga D."/>
            <person name="Gaertig J."/>
            <person name="Frankel J."/>
            <person name="Tsao C.-C."/>
            <person name="Gorovsky M.A."/>
            <person name="Keeling P.J."/>
            <person name="Waller R.F."/>
            <person name="Patron N.J."/>
            <person name="Cherry J.M."/>
            <person name="Stover N.A."/>
            <person name="Krieger C.J."/>
            <person name="del Toro C."/>
            <person name="Ryder H.F."/>
            <person name="Williamson S.C."/>
            <person name="Barbeau R.A."/>
            <person name="Hamilton E.P."/>
            <person name="Orias E."/>
        </authorList>
    </citation>
    <scope>NUCLEOTIDE SEQUENCE [LARGE SCALE GENOMIC DNA]</scope>
    <source>
        <strain>SB210</strain>
    </source>
</reference>
<reference key="2">
    <citation type="submission" date="2007-08" db="EMBL/GenBank/DDBJ databases">
        <title>cDNA library made from Tetrahymena thermophila cells.</title>
        <authorList>
            <person name="Coyne R.S."/>
            <person name="Thiagarajan M."/>
            <person name="Eisen J.A."/>
            <person name="Methe B."/>
        </authorList>
    </citation>
    <scope>NUCLEOTIDE SEQUENCE [LARGE SCALE MRNA]</scope>
    <source>
        <strain>SB210</strain>
    </source>
</reference>
<gene>
    <name type="primary">RPL37</name>
    <name type="ORF">TTHERM_01068180</name>
</gene>
<evidence type="ECO:0000250" key="1"/>
<evidence type="ECO:0000255" key="2"/>
<evidence type="ECO:0000305" key="3"/>
<comment type="function">
    <text evidence="1">Binds to the 23S rRNA.</text>
</comment>
<comment type="cofactor">
    <cofactor evidence="1">
        <name>Zn(2+)</name>
        <dbReference type="ChEBI" id="CHEBI:29105"/>
    </cofactor>
    <text evidence="1">Binds 1 zinc ion per subunit.</text>
</comment>
<comment type="subcellular location">
    <subcellularLocation>
        <location evidence="1">Cytoplasm</location>
    </subcellularLocation>
</comment>
<comment type="similarity">
    <text evidence="3">Belongs to the eukaryotic ribosomal protein eL37 family.</text>
</comment>
<comment type="sequence caution" evidence="3">
    <conflict type="erroneous initiation">
        <sequence resource="EMBL-CDS" id="EAR82915"/>
    </conflict>
    <text>Extended N-terminus.</text>
</comment>
<dbReference type="EMBL" id="GG662550">
    <property type="protein sequence ID" value="EAR82915.2"/>
    <property type="status" value="ALT_INIT"/>
    <property type="molecule type" value="Genomic_DNA"/>
</dbReference>
<dbReference type="EMBL" id="EV847192">
    <property type="status" value="NOT_ANNOTATED_CDS"/>
    <property type="molecule type" value="mRNA"/>
</dbReference>
<dbReference type="RefSeq" id="XP_001030578.2">
    <property type="nucleotide sequence ID" value="XM_001030578.3"/>
</dbReference>
<dbReference type="PDB" id="4V8P">
    <property type="method" value="X-ray"/>
    <property type="resolution" value="3.52 A"/>
    <property type="chains" value="AA/DA/FA/HA=1-94"/>
</dbReference>
<dbReference type="PDBsum" id="4V8P"/>
<dbReference type="SMR" id="P0DJ24"/>
<dbReference type="FunCoup" id="P0DJ24">
    <property type="interactions" value="166"/>
</dbReference>
<dbReference type="IntAct" id="P0DJ24">
    <property type="interactions" value="1"/>
</dbReference>
<dbReference type="STRING" id="312017.P0DJ24"/>
<dbReference type="EnsemblProtists" id="EAR82915">
    <property type="protein sequence ID" value="EAR82915"/>
    <property type="gene ID" value="TTHERM_01068180"/>
</dbReference>
<dbReference type="GeneID" id="7831154"/>
<dbReference type="KEGG" id="tet:TTHERM_01068180"/>
<dbReference type="eggNOG" id="KOG3475">
    <property type="taxonomic scope" value="Eukaryota"/>
</dbReference>
<dbReference type="InParanoid" id="P0DJ24"/>
<dbReference type="OrthoDB" id="282787at2759"/>
<dbReference type="Proteomes" id="UP000009168">
    <property type="component" value="Unassembled WGS sequence"/>
</dbReference>
<dbReference type="GO" id="GO:0022625">
    <property type="term" value="C:cytosolic large ribosomal subunit"/>
    <property type="evidence" value="ECO:0007669"/>
    <property type="project" value="TreeGrafter"/>
</dbReference>
<dbReference type="GO" id="GO:0019843">
    <property type="term" value="F:rRNA binding"/>
    <property type="evidence" value="ECO:0007669"/>
    <property type="project" value="UniProtKB-KW"/>
</dbReference>
<dbReference type="GO" id="GO:0003735">
    <property type="term" value="F:structural constituent of ribosome"/>
    <property type="evidence" value="ECO:0007669"/>
    <property type="project" value="InterPro"/>
</dbReference>
<dbReference type="GO" id="GO:0008270">
    <property type="term" value="F:zinc ion binding"/>
    <property type="evidence" value="ECO:0007669"/>
    <property type="project" value="UniProtKB-KW"/>
</dbReference>
<dbReference type="GO" id="GO:0006412">
    <property type="term" value="P:translation"/>
    <property type="evidence" value="ECO:0007669"/>
    <property type="project" value="InterPro"/>
</dbReference>
<dbReference type="FunFam" id="2.20.25.30:FF:000001">
    <property type="entry name" value="Ribosomal protein L37"/>
    <property type="match status" value="1"/>
</dbReference>
<dbReference type="Gene3D" id="2.20.25.30">
    <property type="match status" value="1"/>
</dbReference>
<dbReference type="InterPro" id="IPR001569">
    <property type="entry name" value="Ribosomal_eL37"/>
</dbReference>
<dbReference type="InterPro" id="IPR011331">
    <property type="entry name" value="Ribosomal_eL37/eL43"/>
</dbReference>
<dbReference type="InterPro" id="IPR018267">
    <property type="entry name" value="Ribosomal_eL37_CS"/>
</dbReference>
<dbReference type="InterPro" id="IPR011332">
    <property type="entry name" value="Ribosomal_zn-bd"/>
</dbReference>
<dbReference type="PANTHER" id="PTHR10768">
    <property type="entry name" value="60S RIBOSOMAL PROTEIN L37"/>
    <property type="match status" value="1"/>
</dbReference>
<dbReference type="PANTHER" id="PTHR10768:SF0">
    <property type="entry name" value="RIBOSOMAL PROTEIN L37"/>
    <property type="match status" value="1"/>
</dbReference>
<dbReference type="Pfam" id="PF01907">
    <property type="entry name" value="Ribosomal_L37e"/>
    <property type="match status" value="1"/>
</dbReference>
<dbReference type="SUPFAM" id="SSF57829">
    <property type="entry name" value="Zn-binding ribosomal proteins"/>
    <property type="match status" value="1"/>
</dbReference>
<dbReference type="PROSITE" id="PS01077">
    <property type="entry name" value="RIBOSOMAL_L37E"/>
    <property type="match status" value="1"/>
</dbReference>
<protein>
    <recommendedName>
        <fullName evidence="3">Large ribosomal subunit protein eL37</fullName>
    </recommendedName>
    <alternativeName>
        <fullName>60S ribosomal protein L37</fullName>
    </alternativeName>
</protein>
<feature type="chain" id="PRO_0000413521" description="Large ribosomal subunit protein eL37">
    <location>
        <begin position="1"/>
        <end position="94"/>
    </location>
</feature>
<feature type="zinc finger region" description="C4-type" evidence="2">
    <location>
        <begin position="19"/>
        <end position="37"/>
    </location>
</feature>
<feature type="binding site" evidence="1">
    <location>
        <position position="19"/>
    </location>
    <ligand>
        <name>Zn(2+)</name>
        <dbReference type="ChEBI" id="CHEBI:29105"/>
    </ligand>
</feature>
<feature type="binding site" evidence="1">
    <location>
        <position position="22"/>
    </location>
    <ligand>
        <name>Zn(2+)</name>
        <dbReference type="ChEBI" id="CHEBI:29105"/>
    </ligand>
</feature>
<feature type="binding site" evidence="1">
    <location>
        <position position="34"/>
    </location>
    <ligand>
        <name>Zn(2+)</name>
        <dbReference type="ChEBI" id="CHEBI:29105"/>
    </ligand>
</feature>
<feature type="binding site" evidence="1">
    <location>
        <position position="37"/>
    </location>
    <ligand>
        <name>Zn(2+)</name>
        <dbReference type="ChEBI" id="CHEBI:29105"/>
    </ligand>
</feature>
<name>RL37_TETTS</name>
<keyword id="KW-0002">3D-structure</keyword>
<keyword id="KW-0963">Cytoplasm</keyword>
<keyword id="KW-0479">Metal-binding</keyword>
<keyword id="KW-1185">Reference proteome</keyword>
<keyword id="KW-0687">Ribonucleoprotein</keyword>
<keyword id="KW-0689">Ribosomal protein</keyword>
<keyword id="KW-0694">RNA-binding</keyword>
<keyword id="KW-0699">rRNA-binding</keyword>
<keyword id="KW-0862">Zinc</keyword>
<keyword id="KW-0863">Zinc-finger</keyword>
<proteinExistence type="evidence at protein level"/>
<sequence>MTRGTPAFGKRHQKTHTLCRRCGKATYHKQKLRCAACGYPDAKMRRYDGWGQKVRDRKGQGTGRMRYMKTIARRAKNGFRSGTQAAPKVKAATN</sequence>
<organism>
    <name type="scientific">Tetrahymena thermophila (strain SB210)</name>
    <dbReference type="NCBI Taxonomy" id="312017"/>
    <lineage>
        <taxon>Eukaryota</taxon>
        <taxon>Sar</taxon>
        <taxon>Alveolata</taxon>
        <taxon>Ciliophora</taxon>
        <taxon>Intramacronucleata</taxon>
        <taxon>Oligohymenophorea</taxon>
        <taxon>Hymenostomatida</taxon>
        <taxon>Tetrahymenina</taxon>
        <taxon>Tetrahymenidae</taxon>
        <taxon>Tetrahymena</taxon>
    </lineage>
</organism>